<accession>Q5FVN0</accession>
<protein>
    <recommendedName>
        <fullName>Lysophospholipid acyltransferase 5</fullName>
        <shortName>LPLAT 5</shortName>
        <ecNumber evidence="2">2.3.1.-</ecNumber>
    </recommendedName>
    <alternativeName>
        <fullName>1-acylglycerophosphocholine O-acyltransferase</fullName>
        <ecNumber evidence="2">2.3.1.23</ecNumber>
    </alternativeName>
    <alternativeName>
        <fullName>1-acylglycerophosphoethanolamine O-acyltransferase</fullName>
        <ecNumber evidence="2">2.3.1.n7</ecNumber>
    </alternativeName>
    <alternativeName>
        <fullName>1-acylglycerophosphoserine O-acyltransferase</fullName>
        <ecNumber evidence="2">2.3.1.n6</ecNumber>
    </alternativeName>
    <alternativeName>
        <fullName>Lysophosphatidylcholine acyltransferase 3</fullName>
        <shortName>Lyso-PC acyltransferase 3</shortName>
    </alternativeName>
    <alternativeName>
        <fullName>Membrane-bound O-acyltransferase domain-containing protein 5</fullName>
        <shortName>O-acyltransferase domain-containing protein 5</shortName>
    </alternativeName>
</protein>
<feature type="initiator methionine" description="Removed" evidence="2">
    <location>
        <position position="1"/>
    </location>
</feature>
<feature type="chain" id="PRO_0000233384" description="Lysophospholipid acyltransferase 5">
    <location>
        <begin position="2"/>
        <end position="487"/>
    </location>
</feature>
<feature type="transmembrane region" description="Helical" evidence="4">
    <location>
        <begin position="44"/>
        <end position="64"/>
    </location>
</feature>
<feature type="transmembrane region" description="Helical" evidence="4">
    <location>
        <begin position="67"/>
        <end position="87"/>
    </location>
</feature>
<feature type="transmembrane region" description="Helical" evidence="4">
    <location>
        <begin position="111"/>
        <end position="131"/>
    </location>
</feature>
<feature type="transmembrane region" description="Helical" evidence="4">
    <location>
        <begin position="178"/>
        <end position="198"/>
    </location>
</feature>
<feature type="transmembrane region" description="Helical" evidence="4">
    <location>
        <begin position="236"/>
        <end position="256"/>
    </location>
</feature>
<feature type="transmembrane region" description="Helical" evidence="4">
    <location>
        <begin position="285"/>
        <end position="305"/>
    </location>
</feature>
<feature type="transmembrane region" description="Helical" evidence="4">
    <location>
        <begin position="364"/>
        <end position="384"/>
    </location>
</feature>
<feature type="transmembrane region" description="Helical" evidence="4">
    <location>
        <begin position="422"/>
        <end position="442"/>
    </location>
</feature>
<feature type="transmembrane region" description="Helical" evidence="4">
    <location>
        <begin position="453"/>
        <end position="473"/>
    </location>
</feature>
<feature type="short sequence motif" description="Di-lysine motif">
    <location>
        <begin position="484"/>
        <end position="487"/>
    </location>
</feature>
<feature type="active site" evidence="1">
    <location>
        <position position="338"/>
    </location>
</feature>
<feature type="active site" evidence="1">
    <location>
        <position position="374"/>
    </location>
</feature>
<feature type="modified residue" description="N-acetylalanine" evidence="2">
    <location>
        <position position="2"/>
    </location>
</feature>
<feature type="glycosylation site" description="N-linked (GlcNAc...) asparagine" evidence="4">
    <location>
        <position position="308"/>
    </location>
</feature>
<sequence>MASTADGDVGETLGQMRGLWPGVEDLSLNKLATSLGASEQALRLIFSIFLGYPLALFYRHYLFYKDSYLIHLFHAFSGLSIAYFNFGHQFYHSLLCVVLQFLILRLMGRTITAVFTTLCFQMAYLLAGYYYTATGDYDIKWTMPHCVLTLKLIGLSIDYYDGGKDRNSLSSEQQKYAILGVPSLLEVAGFSYFYGAFLVGPQFSMNHYMKLVKGQLTDVPGKMPNSTIPALKRLSLGLVYLVGYTLLSPHITEDYLLTEDYDTRPFWFRCMYMLIWGKFVLYKYVTCWLVTEGVCILSGLGFNGFEENGTVKWDACANMKVWLFETTPRFTGTIASFNINTNAWVARYIFKRLKFLGNKELSQGLSLLFLALWHGLHSGYLICFQMEFLIVIVEKQATNLIRDSPALSSLASITALQPFYYLVQQTIHWLFMGYSMTAFCLFTWDKWLKVYRSIYFLGHVFFLSLLFTLPYVYKAMVPRKEKLKKRE</sequence>
<proteinExistence type="evidence at transcript level"/>
<comment type="function">
    <text evidence="2 3">Lysophospholipid O-acyltransferase (LPLAT) that catalyzes the reacylation step of the phospholipid remodeling process also known as the Lands cycle. Catalyzes transfer of the fatty acyl chain from fatty acyl-CoA to 1-acyl lysophospholipid to form various classes of phospholipids. Converts 1-acyl lysophosphatidylcholine (LPC) into phosphatidylcholine (PC) (LPCAT activity), 1-acyl lysophosphatidylserine (LPS) into phosphatidylserine (PS) (LPSAT activity) and 1-acyl lysophosphatidylethanolamine (LPE) into phosphatidylethanolamine (PE) (LPEAT activity). Favors polyunsaturated fatty acyl-CoAs as acyl donors compared to saturated fatty acyl-CoAs (By similarity). Has higher activity for LPC acyl acceptors compared to LPEs and LPSs. Can also transfer the fatty acyl chain from fatty acyl-CoA to 1-O-alkyl lysophospholipid or 1-O-alkenyl lysophospholipid with lower efficiency. Acts as a major LPC O-acyltransferase in liver and intestine. As a component of the liver X receptor/NR1H3 or NR1H2 signaling pathway, mainly catalyzes the incorporation of arachidonate into PCs of endoplasmic reticulum (ER) membranes, increasing membrane dynamics and enabling triacylglycerols transfer to nascent very low-density lipoprotein (VLDL) particles. Promotes processing of sterol regulatory protein SREBF1 in hepatocytes, likely by facilitating the translocation of SREBF1-SCAP complex from ER to the Golgi apparatus. Participates in mechanisms by which the liver X receptor/NR1H3 or NR1H2 signaling pathway counteracts lipid-induced ER stress response and inflammation. Down-regulates hepatic inflammation by limiting arachidonic acid availability for synthesis of inflammatory eicosanoids, such as prostaglandins. In enterocytes, acts as a component of a gut-brain feedback loop that coordinates dietary lipid absorption and food intake. Regulates the abundance of PCs containing linoleate and arachidonate in enterocyte membranes, enabling passive diffusion of fatty acids and cholesterol across the membrane for efficient chylomicron assembly. In the intestinal crypt, acts as a component of dietary-responsive phospholipid-cholesterol axis, regulating the biosynthesis of cholesterol and its mitogenic effects on intestinal stem cells (By similarity).</text>
</comment>
<comment type="catalytic activity">
    <reaction evidence="2">
        <text>a 1-acyl-sn-glycero-3-phosphocholine + an acyl-CoA = a 1,2-diacyl-sn-glycero-3-phosphocholine + CoA</text>
        <dbReference type="Rhea" id="RHEA:12937"/>
        <dbReference type="ChEBI" id="CHEBI:57287"/>
        <dbReference type="ChEBI" id="CHEBI:57643"/>
        <dbReference type="ChEBI" id="CHEBI:58168"/>
        <dbReference type="ChEBI" id="CHEBI:58342"/>
        <dbReference type="EC" id="2.3.1.23"/>
    </reaction>
    <physiologicalReaction direction="left-to-right" evidence="2">
        <dbReference type="Rhea" id="RHEA:12938"/>
    </physiologicalReaction>
</comment>
<comment type="catalytic activity">
    <reaction evidence="2">
        <text>a 1-acyl-sn-glycero-3-phosphoethanolamine + an acyl-CoA = a 1,2-diacyl-sn-glycero-3-phosphoethanolamine + CoA</text>
        <dbReference type="Rhea" id="RHEA:32995"/>
        <dbReference type="ChEBI" id="CHEBI:57287"/>
        <dbReference type="ChEBI" id="CHEBI:58342"/>
        <dbReference type="ChEBI" id="CHEBI:64381"/>
        <dbReference type="ChEBI" id="CHEBI:64612"/>
        <dbReference type="EC" id="2.3.1.n7"/>
    </reaction>
    <physiologicalReaction direction="left-to-right" evidence="2">
        <dbReference type="Rhea" id="RHEA:32996"/>
    </physiologicalReaction>
</comment>
<comment type="catalytic activity">
    <reaction evidence="2">
        <text>a 1-acyl-sn-glycero-3-phospho-L-serine + an acyl-CoA = a 1,2-diacyl-sn-glycero-3-phospho-L-serine + CoA</text>
        <dbReference type="Rhea" id="RHEA:33191"/>
        <dbReference type="ChEBI" id="CHEBI:57262"/>
        <dbReference type="ChEBI" id="CHEBI:57287"/>
        <dbReference type="ChEBI" id="CHEBI:58342"/>
        <dbReference type="ChEBI" id="CHEBI:64379"/>
        <dbReference type="EC" id="2.3.1.n6"/>
    </reaction>
    <physiologicalReaction direction="left-to-right" evidence="2">
        <dbReference type="Rhea" id="RHEA:33192"/>
    </physiologicalReaction>
</comment>
<comment type="catalytic activity">
    <reaction evidence="2">
        <text>(9Z,12Z)-octadecadienoyl-CoA + a 1-acyl-sn-glycero-3-phosphocholine = 1-acyl-2-(9Z,12Z)-octadecadienoyl-sn-glycero-3-phosphocholine + CoA</text>
        <dbReference type="Rhea" id="RHEA:37563"/>
        <dbReference type="ChEBI" id="CHEBI:57287"/>
        <dbReference type="ChEBI" id="CHEBI:57383"/>
        <dbReference type="ChEBI" id="CHEBI:58168"/>
        <dbReference type="ChEBI" id="CHEBI:60000"/>
    </reaction>
    <physiologicalReaction direction="left-to-right" evidence="2">
        <dbReference type="Rhea" id="RHEA:37564"/>
    </physiologicalReaction>
</comment>
<comment type="catalytic activity">
    <reaction evidence="2">
        <text>(5Z,8Z,11Z,14Z)-eicosatetraenoyl-CoA + a 1-acyl-sn-glycero-3-phosphocholine = 1-acyl-2-(5Z,8Z,11Z,14Z-eicosatetraenoyl)-sn-glycero-3-phosphocholine + CoA</text>
        <dbReference type="Rhea" id="RHEA:37559"/>
        <dbReference type="ChEBI" id="CHEBI:57287"/>
        <dbReference type="ChEBI" id="CHEBI:57368"/>
        <dbReference type="ChEBI" id="CHEBI:58168"/>
        <dbReference type="ChEBI" id="CHEBI:75063"/>
    </reaction>
    <physiologicalReaction direction="left-to-right" evidence="2">
        <dbReference type="Rhea" id="RHEA:37560"/>
    </physiologicalReaction>
</comment>
<comment type="catalytic activity">
    <reaction evidence="2">
        <text>dodecanoyl-CoA + 1-hexadecanoyl-sn-glycero-3-phosphocholine = 1-hexadecanoyl-2-dodecanoyl-sn-glycero-3-phosphocholine + CoA</text>
        <dbReference type="Rhea" id="RHEA:37515"/>
        <dbReference type="ChEBI" id="CHEBI:57287"/>
        <dbReference type="ChEBI" id="CHEBI:57375"/>
        <dbReference type="ChEBI" id="CHEBI:72998"/>
        <dbReference type="ChEBI" id="CHEBI:75018"/>
    </reaction>
    <physiologicalReaction direction="left-to-right" evidence="2">
        <dbReference type="Rhea" id="RHEA:37516"/>
    </physiologicalReaction>
</comment>
<comment type="catalytic activity">
    <reaction evidence="2">
        <text>octadecanoyl-CoA + 1-hexadecanoyl-sn-glycero-3-phosphocholine = 1-hexadecanoyl-2-octadecanoyl-sn-glycero-3-phosphocholine + CoA</text>
        <dbReference type="Rhea" id="RHEA:35987"/>
        <dbReference type="ChEBI" id="CHEBI:57287"/>
        <dbReference type="ChEBI" id="CHEBI:57394"/>
        <dbReference type="ChEBI" id="CHEBI:72998"/>
        <dbReference type="ChEBI" id="CHEBI:73000"/>
    </reaction>
    <physiologicalReaction direction="left-to-right" evidence="2">
        <dbReference type="Rhea" id="RHEA:35988"/>
    </physiologicalReaction>
</comment>
<comment type="catalytic activity">
    <reaction evidence="2">
        <text>1-dodecanoyl-sn-glycero-3-phosphocholine + hexadecanoyl-CoA = 1-dodecanoyl-2-hexadecanoyl-sn-glycero-3-phosphocholine + CoA</text>
        <dbReference type="Rhea" id="RHEA:37511"/>
        <dbReference type="ChEBI" id="CHEBI:57287"/>
        <dbReference type="ChEBI" id="CHEBI:57379"/>
        <dbReference type="ChEBI" id="CHEBI:74966"/>
        <dbReference type="ChEBI" id="CHEBI:75017"/>
    </reaction>
    <physiologicalReaction direction="left-to-right" evidence="2">
        <dbReference type="Rhea" id="RHEA:37512"/>
    </physiologicalReaction>
</comment>
<comment type="catalytic activity">
    <reaction evidence="2">
        <text>1-tetradecanoyl-sn-glycero-3-phosphocholine + hexadecanoyl-CoA = 1-tetradecanoyl-2-hexadecanoyl-sn-glycero-3-phosphocholine + CoA</text>
        <dbReference type="Rhea" id="RHEA:37655"/>
        <dbReference type="ChEBI" id="CHEBI:57287"/>
        <dbReference type="ChEBI" id="CHEBI:57379"/>
        <dbReference type="ChEBI" id="CHEBI:64489"/>
        <dbReference type="ChEBI" id="CHEBI:75062"/>
    </reaction>
    <physiologicalReaction direction="left-to-right" evidence="2">
        <dbReference type="Rhea" id="RHEA:37656"/>
    </physiologicalReaction>
</comment>
<comment type="catalytic activity">
    <reaction evidence="2">
        <text>1-hexadecanoyl-sn-glycero-3-phosphocholine + hexadecanoyl-CoA = 1,2-dihexadecanoyl-sn-glycero-3-phosphocholine + CoA</text>
        <dbReference type="Rhea" id="RHEA:35983"/>
        <dbReference type="ChEBI" id="CHEBI:57287"/>
        <dbReference type="ChEBI" id="CHEBI:57379"/>
        <dbReference type="ChEBI" id="CHEBI:72998"/>
        <dbReference type="ChEBI" id="CHEBI:72999"/>
    </reaction>
    <physiologicalReaction direction="left-to-right" evidence="2">
        <dbReference type="Rhea" id="RHEA:35984"/>
    </physiologicalReaction>
</comment>
<comment type="catalytic activity">
    <reaction evidence="2">
        <text>1-octadecanoyl-sn-glycero-3-phosphocholine + hexadecanoyl-CoA = 1-octadecanoyl-2-hexadecanoyl-sn-glycero-3-phosphocholine + CoA</text>
        <dbReference type="Rhea" id="RHEA:37527"/>
        <dbReference type="ChEBI" id="CHEBI:57287"/>
        <dbReference type="ChEBI" id="CHEBI:57379"/>
        <dbReference type="ChEBI" id="CHEBI:73858"/>
        <dbReference type="ChEBI" id="CHEBI:75026"/>
    </reaction>
    <physiologicalReaction direction="left-to-right" evidence="2">
        <dbReference type="Rhea" id="RHEA:37528"/>
    </physiologicalReaction>
</comment>
<comment type="catalytic activity">
    <reaction evidence="2">
        <text>1-(9Z-octadecenoyl)-sn-glycero-3-phosphocholine + hexadecanoyl-CoA = 1-(9Z-octadecenoyl)-2-hexadecanoyl-sn-glycero-3-phosphocholine + CoA</text>
        <dbReference type="Rhea" id="RHEA:37383"/>
        <dbReference type="ChEBI" id="CHEBI:28610"/>
        <dbReference type="ChEBI" id="CHEBI:57287"/>
        <dbReference type="ChEBI" id="CHEBI:57379"/>
        <dbReference type="ChEBI" id="CHEBI:74667"/>
    </reaction>
    <physiologicalReaction direction="left-to-right" evidence="2">
        <dbReference type="Rhea" id="RHEA:37384"/>
    </physiologicalReaction>
</comment>
<comment type="catalytic activity">
    <reaction evidence="2">
        <text>(9Z)-hexadecenoyl-CoA + 1-hexadecanoyl-sn-glycero-3-phosphocholine = 1-hexadecanoyl-2-(9Z-hexadecenoyl)-sn-glycero-3-phosphocholine + CoA</text>
        <dbReference type="Rhea" id="RHEA:37207"/>
        <dbReference type="ChEBI" id="CHEBI:57287"/>
        <dbReference type="ChEBI" id="CHEBI:61540"/>
        <dbReference type="ChEBI" id="CHEBI:72998"/>
        <dbReference type="ChEBI" id="CHEBI:74000"/>
    </reaction>
    <physiologicalReaction direction="left-to-right" evidence="2">
        <dbReference type="Rhea" id="RHEA:37208"/>
    </physiologicalReaction>
</comment>
<comment type="catalytic activity">
    <reaction evidence="2">
        <text>1-hexadecanoyl-sn-glycero-3-phosphocholine + (9Z)-octadecenoyl-CoA = 1-hexadecanoyl-2-(9Z-octadecenoyl)-sn-glycero-3-phosphocholine + CoA</text>
        <dbReference type="Rhea" id="RHEA:35991"/>
        <dbReference type="ChEBI" id="CHEBI:57287"/>
        <dbReference type="ChEBI" id="CHEBI:57387"/>
        <dbReference type="ChEBI" id="CHEBI:72998"/>
        <dbReference type="ChEBI" id="CHEBI:73001"/>
    </reaction>
    <physiologicalReaction direction="left-to-right" evidence="2">
        <dbReference type="Rhea" id="RHEA:35992"/>
    </physiologicalReaction>
</comment>
<comment type="catalytic activity">
    <reaction evidence="2">
        <text>(9Z,12Z)-octadecadienoyl-CoA + 1-hexadecanoyl-sn-glycero-3-phosphocholine = 1-hexadecanoyl-2-(9Z,12Z-octadecadienoyl)-sn-glycero-3-phosphocholine + CoA</text>
        <dbReference type="Rhea" id="RHEA:35995"/>
        <dbReference type="ChEBI" id="CHEBI:57287"/>
        <dbReference type="ChEBI" id="CHEBI:57383"/>
        <dbReference type="ChEBI" id="CHEBI:72998"/>
        <dbReference type="ChEBI" id="CHEBI:73002"/>
    </reaction>
    <physiologicalReaction direction="left-to-right" evidence="2">
        <dbReference type="Rhea" id="RHEA:35996"/>
    </physiologicalReaction>
</comment>
<comment type="catalytic activity">
    <reaction evidence="3">
        <text>1-dodecanoyl-sn-glycero-3-phosphocholine + (5Z,8Z,11Z,14Z)-eicosatetraenoyl-CoA = 1-dodecanoyl-2-(5Z,8Z,11Z,14Z)-eicosatetraenoyl-sn-glycero-3-phosphocholine + CoA</text>
        <dbReference type="Rhea" id="RHEA:37483"/>
        <dbReference type="ChEBI" id="CHEBI:57287"/>
        <dbReference type="ChEBI" id="CHEBI:57368"/>
        <dbReference type="ChEBI" id="CHEBI:74966"/>
        <dbReference type="ChEBI" id="CHEBI:74967"/>
    </reaction>
    <physiologicalReaction direction="left-to-right" evidence="3">
        <dbReference type="Rhea" id="RHEA:37484"/>
    </physiologicalReaction>
</comment>
<comment type="catalytic activity">
    <reaction evidence="2">
        <text>(5Z,8Z,11Z,14Z)-eicosatetraenoyl-CoA + 1-hexadecanoyl-sn-glycero-3-phosphocholine = 1-hexadecanoyl-2-(5Z,8Z,11Z,14Z-eicosatetraenoyl)-sn-glycero-3-phosphocholine + CoA</text>
        <dbReference type="Rhea" id="RHEA:35999"/>
        <dbReference type="ChEBI" id="CHEBI:57287"/>
        <dbReference type="ChEBI" id="CHEBI:57368"/>
        <dbReference type="ChEBI" id="CHEBI:72998"/>
        <dbReference type="ChEBI" id="CHEBI:73003"/>
    </reaction>
    <physiologicalReaction direction="left-to-right" evidence="2">
        <dbReference type="Rhea" id="RHEA:36000"/>
    </physiologicalReaction>
</comment>
<comment type="catalytic activity">
    <reaction evidence="3">
        <text>1-octadecanoyl-sn-glycero-3-phosphocholine + (5Z,8Z,11Z,14Z)-eicosatetraenoyl-CoA = 1-octadecanoyl-2-(5Z,8Z,11Z,14Z-eicosatetraenoyl)-sn-glycero-3-phosphocholine + CoA</text>
        <dbReference type="Rhea" id="RHEA:37479"/>
        <dbReference type="ChEBI" id="CHEBI:57287"/>
        <dbReference type="ChEBI" id="CHEBI:57368"/>
        <dbReference type="ChEBI" id="CHEBI:73858"/>
        <dbReference type="ChEBI" id="CHEBI:74965"/>
    </reaction>
    <physiologicalReaction direction="left-to-right" evidence="3">
        <dbReference type="Rhea" id="RHEA:37480"/>
    </physiologicalReaction>
</comment>
<comment type="catalytic activity">
    <reaction evidence="3">
        <text>1-eicosanoyl-sn-glycero-3-phosphocholine + (5Z,8Z,11Z,14Z)-eicosatetraenoyl-CoA = 1-eicosanoyl-2-(5Z,8Z,11Z,14Z)-eicosatetraenoyl-sn-glycero-3-phosphocholine + CoA</text>
        <dbReference type="Rhea" id="RHEA:37487"/>
        <dbReference type="ChEBI" id="CHEBI:57287"/>
        <dbReference type="ChEBI" id="CHEBI:57368"/>
        <dbReference type="ChEBI" id="CHEBI:74968"/>
        <dbReference type="ChEBI" id="CHEBI:74970"/>
    </reaction>
    <physiologicalReaction direction="left-to-right" evidence="3">
        <dbReference type="Rhea" id="RHEA:37488"/>
    </physiologicalReaction>
</comment>
<comment type="catalytic activity">
    <reaction evidence="2">
        <text>1-(9Z-octadecenoyl)-sn-glycero-3-phosphocholine + (9Z)-octadecenoyl-CoA = 1,2-di-(9Z-octadecenoyl)-sn-glycero-3-phosphocholine + CoA</text>
        <dbReference type="Rhea" id="RHEA:37387"/>
        <dbReference type="ChEBI" id="CHEBI:28610"/>
        <dbReference type="ChEBI" id="CHEBI:57287"/>
        <dbReference type="ChEBI" id="CHEBI:57387"/>
        <dbReference type="ChEBI" id="CHEBI:74669"/>
    </reaction>
    <physiologicalReaction direction="left-to-right" evidence="2">
        <dbReference type="Rhea" id="RHEA:37388"/>
    </physiologicalReaction>
</comment>
<comment type="catalytic activity">
    <reaction evidence="2">
        <text>1-(9Z-octadecenoyl)-sn-glycero-3-phosphocholine + (9Z,12Z)-octadecadienoyl-CoA = 1-(9Z)-octadecenoyl-2-(9Z,12Z)-octadecadienoyl-sn-glycero-3-phosphocholine + CoA</text>
        <dbReference type="Rhea" id="RHEA:37391"/>
        <dbReference type="ChEBI" id="CHEBI:28610"/>
        <dbReference type="ChEBI" id="CHEBI:57287"/>
        <dbReference type="ChEBI" id="CHEBI:57383"/>
        <dbReference type="ChEBI" id="CHEBI:74670"/>
    </reaction>
    <physiologicalReaction direction="left-to-right" evidence="2">
        <dbReference type="Rhea" id="RHEA:37392"/>
    </physiologicalReaction>
</comment>
<comment type="catalytic activity">
    <reaction evidence="2">
        <text>1-(9Z-octadecenoyl)-sn-glycero-3-phosphocholine + (5Z,8Z,11Z,14Z)-eicosatetraenoyl-CoA = 1-(9Z)-octadecenoyl-2-(5Z,8Z,11Z,14Z)-icosatetraenoyl-sn-glycero-3-phosphocholine + CoA</text>
        <dbReference type="Rhea" id="RHEA:37395"/>
        <dbReference type="ChEBI" id="CHEBI:28610"/>
        <dbReference type="ChEBI" id="CHEBI:57287"/>
        <dbReference type="ChEBI" id="CHEBI:57368"/>
        <dbReference type="ChEBI" id="CHEBI:74671"/>
    </reaction>
    <physiologicalReaction direction="left-to-right" evidence="2">
        <dbReference type="Rhea" id="RHEA:37396"/>
    </physiologicalReaction>
</comment>
<comment type="catalytic activity">
    <reaction evidence="2">
        <text>a 1-acyl-sn-glycero-3-phosphoethanolamine + (9Z,12Z)-octadecadienoyl-CoA = 1-acyl-2-(9Z,12Z)-octadecadienoyl-sn-glycero-3-phosphoethanolamine + CoA</text>
        <dbReference type="Rhea" id="RHEA:37579"/>
        <dbReference type="ChEBI" id="CHEBI:57287"/>
        <dbReference type="ChEBI" id="CHEBI:57383"/>
        <dbReference type="ChEBI" id="CHEBI:64381"/>
        <dbReference type="ChEBI" id="CHEBI:75069"/>
    </reaction>
    <physiologicalReaction direction="left-to-right" evidence="2">
        <dbReference type="Rhea" id="RHEA:37580"/>
    </physiologicalReaction>
</comment>
<comment type="catalytic activity">
    <reaction evidence="3">
        <text>1-(9Z-octadecenoyl)-sn-glycero-3-phosphoethanolamine + (9Z,12Z)-octadecadienoyl-CoA = 1-(9Z)-octadecenoyl-2-(9Z,12Z)-octadecadienoyl-sn-glycero-3-phosphoethanolamine + CoA</text>
        <dbReference type="Rhea" id="RHEA:37503"/>
        <dbReference type="ChEBI" id="CHEBI:57287"/>
        <dbReference type="ChEBI" id="CHEBI:57383"/>
        <dbReference type="ChEBI" id="CHEBI:74971"/>
        <dbReference type="ChEBI" id="CHEBI:74977"/>
    </reaction>
    <physiologicalReaction direction="left-to-right" evidence="3">
        <dbReference type="Rhea" id="RHEA:37504"/>
    </physiologicalReaction>
</comment>
<comment type="catalytic activity">
    <reaction evidence="3">
        <text>1-(10Z-heptadecenoyl)-sn-glycero-3-phosphoethanolamine + (9Z,12Z)-octadecadienoyl-CoA = 1-(10Z-heptadecenoyl)-2-(9Z,12Z-octadecadienoyl)-sn-glycero-3-phosphoethanolamine + CoA</text>
        <dbReference type="Rhea" id="RHEA:64228"/>
        <dbReference type="ChEBI" id="CHEBI:57287"/>
        <dbReference type="ChEBI" id="CHEBI:57383"/>
        <dbReference type="ChEBI" id="CHEBI:149768"/>
        <dbReference type="ChEBI" id="CHEBI:149770"/>
    </reaction>
    <physiologicalReaction direction="left-to-right" evidence="3">
        <dbReference type="Rhea" id="RHEA:64229"/>
    </physiologicalReaction>
</comment>
<comment type="catalytic activity">
    <reaction evidence="2">
        <text>a 1-acyl-sn-glycero-3-phosphoethanolamine + (5Z,8Z,11Z,14Z)-eicosatetraenoyl-CoA = 1-acyl-2-(5Z,8Z,11Z,14Z)-eicosatetraenoyl-sn-glycero-3-phosphoethanolamine + CoA</text>
        <dbReference type="Rhea" id="RHEA:37575"/>
        <dbReference type="ChEBI" id="CHEBI:57287"/>
        <dbReference type="ChEBI" id="CHEBI:57368"/>
        <dbReference type="ChEBI" id="CHEBI:64381"/>
        <dbReference type="ChEBI" id="CHEBI:75067"/>
    </reaction>
    <physiologicalReaction direction="left-to-right" evidence="2">
        <dbReference type="Rhea" id="RHEA:37576"/>
    </physiologicalReaction>
</comment>
<comment type="catalytic activity">
    <reaction evidence="2">
        <text>1-hexadecanoyl-sn-glycero-3-phosphoethanolamine + (5Z,8Z,11Z,14Z)-eicosatetraenoyl-CoA = 1-hexadecanoyl-2-(5Z,8Z,11Z,14Z-eicosatetraenoyl)-sn-glycero-3-phosphoethanolamine + CoA</text>
        <dbReference type="Rhea" id="RHEA:36023"/>
        <dbReference type="ChEBI" id="CHEBI:57287"/>
        <dbReference type="ChEBI" id="CHEBI:57368"/>
        <dbReference type="ChEBI" id="CHEBI:73004"/>
        <dbReference type="ChEBI" id="CHEBI:73009"/>
    </reaction>
    <physiologicalReaction direction="left-to-right" evidence="2">
        <dbReference type="Rhea" id="RHEA:36024"/>
    </physiologicalReaction>
</comment>
<comment type="catalytic activity">
    <reaction evidence="3">
        <text>1-(9Z-octadecenoyl)-sn-glycero-3-phosphoethanolamine + (5Z,8Z,11Z,14Z)-eicosatetraenoyl-CoA = 1-(9Z)-octadecenoyl-2-(5Z,8Z,11Z,14Z)-eicosatetraenoyl-sn-glycero-3-phosphoethanolamine + CoA</text>
        <dbReference type="Rhea" id="RHEA:37495"/>
        <dbReference type="ChEBI" id="CHEBI:57287"/>
        <dbReference type="ChEBI" id="CHEBI:57368"/>
        <dbReference type="ChEBI" id="CHEBI:74971"/>
        <dbReference type="ChEBI" id="CHEBI:74975"/>
    </reaction>
    <physiologicalReaction direction="left-to-right" evidence="3">
        <dbReference type="Rhea" id="RHEA:37496"/>
    </physiologicalReaction>
</comment>
<comment type="catalytic activity">
    <reaction evidence="3">
        <text>1-(10Z-heptadecenoyl)-sn-glycero-3-phosphoethanolamine + (5Z,8Z,11Z,14Z)-eicosatetraenoyl-CoA = 1-(10Z-heptadecenoyl)-2-(5Z,8Z,11Z,14Z-eicosatetraenoyl)-sn-glycero-3-phosphoethanolamine + CoA</text>
        <dbReference type="Rhea" id="RHEA:64204"/>
        <dbReference type="ChEBI" id="CHEBI:57287"/>
        <dbReference type="ChEBI" id="CHEBI:57368"/>
        <dbReference type="ChEBI" id="CHEBI:149768"/>
        <dbReference type="ChEBI" id="CHEBI:149769"/>
    </reaction>
    <physiologicalReaction direction="left-to-right" evidence="3">
        <dbReference type="Rhea" id="RHEA:64205"/>
    </physiologicalReaction>
</comment>
<comment type="catalytic activity">
    <reaction evidence="3">
        <text>a 1-O-(1Z-alkenyl)-sn-glycero-3-phosphoethanolamine + (5Z,8Z,11Z,14Z)-eicosatetraenoyl-CoA = 1-O-(1Z)-alkenyl-2-(5Z,8Z,11Z,14Z)-eicosatetraenoyl-sn-glycero-3-phosphoethanolamine + CoA</text>
        <dbReference type="Rhea" id="RHEA:37635"/>
        <dbReference type="ChEBI" id="CHEBI:57287"/>
        <dbReference type="ChEBI" id="CHEBI:57368"/>
        <dbReference type="ChEBI" id="CHEBI:77288"/>
        <dbReference type="ChEBI" id="CHEBI:77295"/>
    </reaction>
    <physiologicalReaction direction="left-to-right" evidence="3">
        <dbReference type="Rhea" id="RHEA:37636"/>
    </physiologicalReaction>
</comment>
<comment type="catalytic activity">
    <reaction evidence="2">
        <text>a 1-acyl-sn-glycero-3-phospho-L-serine + (9Z,12Z)-octadecadienoyl-CoA = 1-acyl-2-(9Z,12Z-octadecadienoyl)-sn-glycero-3-phospho-L-serine + CoA</text>
        <dbReference type="Rhea" id="RHEA:37567"/>
        <dbReference type="ChEBI" id="CHEBI:57287"/>
        <dbReference type="ChEBI" id="CHEBI:57383"/>
        <dbReference type="ChEBI" id="CHEBI:64379"/>
        <dbReference type="ChEBI" id="CHEBI:75066"/>
    </reaction>
    <physiologicalReaction direction="left-to-right" evidence="2">
        <dbReference type="Rhea" id="RHEA:37568"/>
    </physiologicalReaction>
</comment>
<comment type="catalytic activity">
    <reaction evidence="2">
        <text>a 1-acyl-sn-glycero-3-phospho-L-serine + (5Z,8Z,11Z,14Z)-eicosatetraenoyl-CoA = 1-acyl-2-(5Z,8Z,11Z,14Z-eicosatetraenoyl)-sn-glycero-3-phospho-L-serine + CoA</text>
        <dbReference type="Rhea" id="RHEA:37571"/>
        <dbReference type="ChEBI" id="CHEBI:57287"/>
        <dbReference type="ChEBI" id="CHEBI:57368"/>
        <dbReference type="ChEBI" id="CHEBI:64379"/>
        <dbReference type="ChEBI" id="CHEBI:75065"/>
    </reaction>
    <physiologicalReaction direction="left-to-right" evidence="2">
        <dbReference type="Rhea" id="RHEA:37572"/>
    </physiologicalReaction>
</comment>
<comment type="catalytic activity">
    <reaction evidence="2">
        <text>1-hexadecanoyl-sn-glycero-3-phospho-L-serine + (9Z)-octadecenoyl-CoA = 1-hexadecanoyl-2-(9Z-octadecenoyl)-sn-glycero-3-phospho-L-serine + CoA</text>
        <dbReference type="Rhea" id="RHEA:37531"/>
        <dbReference type="ChEBI" id="CHEBI:57287"/>
        <dbReference type="ChEBI" id="CHEBI:57387"/>
        <dbReference type="ChEBI" id="CHEBI:75020"/>
        <dbReference type="ChEBI" id="CHEBI:75029"/>
    </reaction>
    <physiologicalReaction direction="left-to-right" evidence="2">
        <dbReference type="Rhea" id="RHEA:37532"/>
    </physiologicalReaction>
</comment>
<comment type="catalytic activity">
    <reaction evidence="3">
        <text>1-(9Z-octadecenoyl)-sn-glycero-3-phospho-L-serine + (9Z)-octadecenoyl-CoA = 1,2-di-(9Z)-octadecenoyl-sn-glycero-3-phospho-L-serine + CoA</text>
        <dbReference type="Rhea" id="RHEA:37407"/>
        <dbReference type="ChEBI" id="CHEBI:57287"/>
        <dbReference type="ChEBI" id="CHEBI:57387"/>
        <dbReference type="ChEBI" id="CHEBI:74617"/>
        <dbReference type="ChEBI" id="CHEBI:74905"/>
    </reaction>
    <physiologicalReaction direction="left-to-right" evidence="3">
        <dbReference type="Rhea" id="RHEA:37408"/>
    </physiologicalReaction>
</comment>
<comment type="catalytic activity">
    <reaction evidence="2">
        <text>1-hexadecanoyl-sn-glycero-3-phospho-L-serine + (9Z,12Z)-octadecadienoyl-CoA = 1-hexadecanoyl-2-(9Z,12Z-octadecadienoyl)-sn-glycero-3-phospho-L-serine + CoA</text>
        <dbReference type="Rhea" id="RHEA:37535"/>
        <dbReference type="ChEBI" id="CHEBI:57287"/>
        <dbReference type="ChEBI" id="CHEBI:57383"/>
        <dbReference type="ChEBI" id="CHEBI:75020"/>
        <dbReference type="ChEBI" id="CHEBI:75031"/>
    </reaction>
    <physiologicalReaction direction="left-to-right" evidence="2">
        <dbReference type="Rhea" id="RHEA:37536"/>
    </physiologicalReaction>
</comment>
<comment type="catalytic activity">
    <reaction evidence="2">
        <text>1-(9Z-octadecenoyl)-sn-glycero-3-phospho-L-serine + (9Z,12Z)-octadecadienoyl-CoA = 1-(9Z-octadecenoyl)-2-(9Z,12Z-octadienoyl)-sn-glycero-3-phospho-L-serine + CoA</text>
        <dbReference type="Rhea" id="RHEA:37375"/>
        <dbReference type="ChEBI" id="CHEBI:57287"/>
        <dbReference type="ChEBI" id="CHEBI:57383"/>
        <dbReference type="ChEBI" id="CHEBI:74617"/>
        <dbReference type="ChEBI" id="CHEBI:74892"/>
    </reaction>
    <physiologicalReaction direction="left-to-right" evidence="2">
        <dbReference type="Rhea" id="RHEA:37376"/>
    </physiologicalReaction>
</comment>
<comment type="catalytic activity">
    <reaction evidence="2">
        <text>1-hexadecanoyl-sn-glycero-3-phospho-L-serine + (5Z,8Z,11Z,14Z)-eicosatetraenoyl-CoA = 1-hexadecanoyl-2-(5Z,8Z,11Z,14Z-eicosatetraenoyl)-sn-glycero-3-phospho-L-serine + CoA</text>
        <dbReference type="Rhea" id="RHEA:37539"/>
        <dbReference type="ChEBI" id="CHEBI:57287"/>
        <dbReference type="ChEBI" id="CHEBI:57368"/>
        <dbReference type="ChEBI" id="CHEBI:75020"/>
        <dbReference type="ChEBI" id="CHEBI:75032"/>
    </reaction>
    <physiologicalReaction direction="left-to-right" evidence="2">
        <dbReference type="Rhea" id="RHEA:37540"/>
    </physiologicalReaction>
</comment>
<comment type="catalytic activity">
    <reaction evidence="2">
        <text>1-(9Z-octadecenoyl)-sn-glycero-3-phospho-L-serine + (5Z,8Z,11Z,14Z)-eicosatetraenoyl-CoA = 1-(9Z-octadecenoyl)-2-(5Z,8Z,11Z,14Z-eicosatetraenoyl)-sn-glycero-3-phospho-L-serine + CoA</text>
        <dbReference type="Rhea" id="RHEA:37379"/>
        <dbReference type="ChEBI" id="CHEBI:57287"/>
        <dbReference type="ChEBI" id="CHEBI:57368"/>
        <dbReference type="ChEBI" id="CHEBI:74617"/>
        <dbReference type="ChEBI" id="CHEBI:74897"/>
    </reaction>
    <physiologicalReaction direction="left-to-right" evidence="2">
        <dbReference type="Rhea" id="RHEA:37380"/>
    </physiologicalReaction>
</comment>
<comment type="pathway">
    <text evidence="2">Lipid metabolism; phospholipid metabolism.</text>
</comment>
<comment type="subcellular location">
    <subcellularLocation>
        <location evidence="2">Endoplasmic reticulum membrane</location>
        <topology evidence="4">Multi-pass membrane protein</topology>
    </subcellularLocation>
</comment>
<comment type="domain">
    <text evidence="1">The di-lysine motif confers endoplasmic reticulum localization.</text>
</comment>
<comment type="similarity">
    <text evidence="4">Belongs to the membrane-bound acyltransferase family.</text>
</comment>
<gene>
    <name type="primary">Lpcat3</name>
    <name evidence="5" type="synonym">Grcc3f</name>
    <name type="synonym">Mboat5</name>
    <name type="synonym">Oact5</name>
</gene>
<organism>
    <name type="scientific">Rattus norvegicus</name>
    <name type="common">Rat</name>
    <dbReference type="NCBI Taxonomy" id="10116"/>
    <lineage>
        <taxon>Eukaryota</taxon>
        <taxon>Metazoa</taxon>
        <taxon>Chordata</taxon>
        <taxon>Craniata</taxon>
        <taxon>Vertebrata</taxon>
        <taxon>Euteleostomi</taxon>
        <taxon>Mammalia</taxon>
        <taxon>Eutheria</taxon>
        <taxon>Euarchontoglires</taxon>
        <taxon>Glires</taxon>
        <taxon>Rodentia</taxon>
        <taxon>Myomorpha</taxon>
        <taxon>Muroidea</taxon>
        <taxon>Muridae</taxon>
        <taxon>Murinae</taxon>
        <taxon>Rattus</taxon>
    </lineage>
</organism>
<name>MBOA5_RAT</name>
<reference key="1">
    <citation type="journal article" date="2004" name="Genome Res.">
        <title>The status, quality, and expansion of the NIH full-length cDNA project: the Mammalian Gene Collection (MGC).</title>
        <authorList>
            <consortium name="The MGC Project Team"/>
        </authorList>
    </citation>
    <scope>NUCLEOTIDE SEQUENCE [LARGE SCALE MRNA]</scope>
    <source>
        <tissue>Liver</tissue>
    </source>
</reference>
<evidence type="ECO:0000250" key="1"/>
<evidence type="ECO:0000250" key="2">
    <source>
        <dbReference type="UniProtKB" id="Q6P1A2"/>
    </source>
</evidence>
<evidence type="ECO:0000250" key="3">
    <source>
        <dbReference type="UniProtKB" id="Q91V01"/>
    </source>
</evidence>
<evidence type="ECO:0000255" key="4"/>
<evidence type="ECO:0000312" key="5">
    <source>
        <dbReference type="EMBL" id="AAH89869.1"/>
    </source>
</evidence>
<keyword id="KW-0007">Acetylation</keyword>
<keyword id="KW-0012">Acyltransferase</keyword>
<keyword id="KW-0256">Endoplasmic reticulum</keyword>
<keyword id="KW-0325">Glycoprotein</keyword>
<keyword id="KW-0444">Lipid biosynthesis</keyword>
<keyword id="KW-0443">Lipid metabolism</keyword>
<keyword id="KW-0472">Membrane</keyword>
<keyword id="KW-0594">Phospholipid biosynthesis</keyword>
<keyword id="KW-1208">Phospholipid metabolism</keyword>
<keyword id="KW-1185">Reference proteome</keyword>
<keyword id="KW-0808">Transferase</keyword>
<keyword id="KW-0812">Transmembrane</keyword>
<keyword id="KW-1133">Transmembrane helix</keyword>
<dbReference type="EC" id="2.3.1.-" evidence="2"/>
<dbReference type="EC" id="2.3.1.23" evidence="2"/>
<dbReference type="EC" id="2.3.1.n7" evidence="2"/>
<dbReference type="EC" id="2.3.1.n6" evidence="2"/>
<dbReference type="EMBL" id="BC089869">
    <property type="protein sequence ID" value="AAH89869.1"/>
    <property type="molecule type" value="mRNA"/>
</dbReference>
<dbReference type="RefSeq" id="NP_001012189.1">
    <property type="nucleotide sequence ID" value="NM_001012189.1"/>
</dbReference>
<dbReference type="RefSeq" id="XP_017448194.1">
    <property type="nucleotide sequence ID" value="XM_017592705.1"/>
</dbReference>
<dbReference type="SMR" id="Q5FVN0"/>
<dbReference type="FunCoup" id="Q5FVN0">
    <property type="interactions" value="896"/>
</dbReference>
<dbReference type="STRING" id="10116.ENSRNOP00000017090"/>
<dbReference type="GlyCosmos" id="Q5FVN0">
    <property type="glycosylation" value="1 site, No reported glycans"/>
</dbReference>
<dbReference type="GlyGen" id="Q5FVN0">
    <property type="glycosylation" value="1 site"/>
</dbReference>
<dbReference type="iPTMnet" id="Q5FVN0"/>
<dbReference type="PhosphoSitePlus" id="Q5FVN0"/>
<dbReference type="PaxDb" id="10116-ENSRNOP00000017090"/>
<dbReference type="Ensembl" id="ENSRNOT00000017090.6">
    <property type="protein sequence ID" value="ENSRNOP00000017090.4"/>
    <property type="gene ID" value="ENSRNOG00000012269.6"/>
</dbReference>
<dbReference type="GeneID" id="362434"/>
<dbReference type="KEGG" id="rno:362434"/>
<dbReference type="UCSC" id="RGD:1310223">
    <property type="organism name" value="rat"/>
</dbReference>
<dbReference type="AGR" id="RGD:1310223"/>
<dbReference type="CTD" id="10162"/>
<dbReference type="RGD" id="1310223">
    <property type="gene designation" value="Lpcat3"/>
</dbReference>
<dbReference type="eggNOG" id="KOG2705">
    <property type="taxonomic scope" value="Eukaryota"/>
</dbReference>
<dbReference type="GeneTree" id="ENSGT01030000234564"/>
<dbReference type="HOGENOM" id="CLU_011340_6_1_1"/>
<dbReference type="InParanoid" id="Q5FVN0"/>
<dbReference type="OMA" id="NAWVSRY"/>
<dbReference type="OrthoDB" id="5974730at2759"/>
<dbReference type="PhylomeDB" id="Q5FVN0"/>
<dbReference type="TreeFam" id="TF106143"/>
<dbReference type="Reactome" id="R-RNO-1482788">
    <property type="pathway name" value="Acyl chain remodelling of PC"/>
</dbReference>
<dbReference type="Reactome" id="R-RNO-1482801">
    <property type="pathway name" value="Acyl chain remodelling of PS"/>
</dbReference>
<dbReference type="Reactome" id="R-RNO-1482839">
    <property type="pathway name" value="Acyl chain remodelling of PE"/>
</dbReference>
<dbReference type="UniPathway" id="UPA00085"/>
<dbReference type="PRO" id="PR:Q5FVN0"/>
<dbReference type="Proteomes" id="UP000002494">
    <property type="component" value="Chromosome 4"/>
</dbReference>
<dbReference type="Bgee" id="ENSRNOG00000012269">
    <property type="expression patterns" value="Expressed in ovary and 19 other cell types or tissues"/>
</dbReference>
<dbReference type="GO" id="GO:0005789">
    <property type="term" value="C:endoplasmic reticulum membrane"/>
    <property type="evidence" value="ECO:0000250"/>
    <property type="project" value="UniProtKB"/>
</dbReference>
<dbReference type="GO" id="GO:0016020">
    <property type="term" value="C:membrane"/>
    <property type="evidence" value="ECO:0000318"/>
    <property type="project" value="GO_Central"/>
</dbReference>
<dbReference type="GO" id="GO:0047184">
    <property type="term" value="F:1-acylglycerophosphocholine O-acyltransferase activity"/>
    <property type="evidence" value="ECO:0000250"/>
    <property type="project" value="UniProtKB"/>
</dbReference>
<dbReference type="GO" id="GO:0106262">
    <property type="term" value="F:1-acylglycerophosphoethanolamine O-acyltransferase activity"/>
    <property type="evidence" value="ECO:0000250"/>
    <property type="project" value="UniProtKB"/>
</dbReference>
<dbReference type="GO" id="GO:0106263">
    <property type="term" value="F:1-acylglycerophosphoserine O-acyltransferase activity"/>
    <property type="evidence" value="ECO:0000250"/>
    <property type="project" value="UniProtKB"/>
</dbReference>
<dbReference type="GO" id="GO:0071617">
    <property type="term" value="F:lysophospholipid acyltransferase activity"/>
    <property type="evidence" value="ECO:0000318"/>
    <property type="project" value="GO_Central"/>
</dbReference>
<dbReference type="GO" id="GO:0034378">
    <property type="term" value="P:chylomicron assembly"/>
    <property type="evidence" value="ECO:0000250"/>
    <property type="project" value="UniProtKB"/>
</dbReference>
<dbReference type="GO" id="GO:0090158">
    <property type="term" value="P:endoplasmic reticulum membrane organization"/>
    <property type="evidence" value="ECO:0000250"/>
    <property type="project" value="UniProtKB"/>
</dbReference>
<dbReference type="GO" id="GO:0036335">
    <property type="term" value="P:intestinal stem cell homeostasis"/>
    <property type="evidence" value="ECO:0000250"/>
    <property type="project" value="UniProtKB"/>
</dbReference>
<dbReference type="GO" id="GO:0030258">
    <property type="term" value="P:lipid modification"/>
    <property type="evidence" value="ECO:0000318"/>
    <property type="project" value="GO_Central"/>
</dbReference>
<dbReference type="GO" id="GO:0050728">
    <property type="term" value="P:negative regulation of inflammatory response"/>
    <property type="evidence" value="ECO:0000250"/>
    <property type="project" value="UniProtKB"/>
</dbReference>
<dbReference type="GO" id="GO:1903573">
    <property type="term" value="P:negative regulation of response to endoplasmic reticulum stress"/>
    <property type="evidence" value="ECO:0000250"/>
    <property type="project" value="UniProtKB"/>
</dbReference>
<dbReference type="GO" id="GO:0036151">
    <property type="term" value="P:phosphatidylcholine acyl-chain remodeling"/>
    <property type="evidence" value="ECO:0000250"/>
    <property type="project" value="UniProtKB"/>
</dbReference>
<dbReference type="GO" id="GO:0006656">
    <property type="term" value="P:phosphatidylcholine biosynthetic process"/>
    <property type="evidence" value="ECO:0000318"/>
    <property type="project" value="GO_Central"/>
</dbReference>
<dbReference type="GO" id="GO:0036152">
    <property type="term" value="P:phosphatidylethanolamine acyl-chain remodeling"/>
    <property type="evidence" value="ECO:0000250"/>
    <property type="project" value="UniProtKB"/>
</dbReference>
<dbReference type="GO" id="GO:0036150">
    <property type="term" value="P:phosphatidylserine acyl-chain remodeling"/>
    <property type="evidence" value="ECO:0000250"/>
    <property type="project" value="UniProtKB"/>
</dbReference>
<dbReference type="GO" id="GO:0045797">
    <property type="term" value="P:positive regulation of intestinal cholesterol absorption"/>
    <property type="evidence" value="ECO:0000250"/>
    <property type="project" value="UniProtKB"/>
</dbReference>
<dbReference type="GO" id="GO:1905885">
    <property type="term" value="P:positive regulation of triglyceride transport"/>
    <property type="evidence" value="ECO:0000250"/>
    <property type="project" value="UniProtKB"/>
</dbReference>
<dbReference type="GO" id="GO:0045540">
    <property type="term" value="P:regulation of cholesterol biosynthetic process"/>
    <property type="evidence" value="ECO:0000250"/>
    <property type="project" value="UniProtKB"/>
</dbReference>
<dbReference type="GO" id="GO:0097006">
    <property type="term" value="P:regulation of plasma lipoprotein particle levels"/>
    <property type="evidence" value="ECO:0000266"/>
    <property type="project" value="RGD"/>
</dbReference>
<dbReference type="GO" id="GO:0034379">
    <property type="term" value="P:very-low-density lipoprotein particle assembly"/>
    <property type="evidence" value="ECO:0000250"/>
    <property type="project" value="UniProtKB"/>
</dbReference>
<dbReference type="InterPro" id="IPR049941">
    <property type="entry name" value="LPLAT_7/PORCN-like"/>
</dbReference>
<dbReference type="InterPro" id="IPR004299">
    <property type="entry name" value="MBOAT_fam"/>
</dbReference>
<dbReference type="PANTHER" id="PTHR13906:SF14">
    <property type="entry name" value="LYSOPHOSPHOLIPID ACYLTRANSFERASE 5"/>
    <property type="match status" value="1"/>
</dbReference>
<dbReference type="PANTHER" id="PTHR13906">
    <property type="entry name" value="PORCUPINE"/>
    <property type="match status" value="1"/>
</dbReference>
<dbReference type="Pfam" id="PF03062">
    <property type="entry name" value="MBOAT"/>
    <property type="match status" value="1"/>
</dbReference>